<gene>
    <name evidence="1" type="primary">rplS</name>
    <name type="ordered locus">CLK_1821</name>
</gene>
<protein>
    <recommendedName>
        <fullName evidence="1">Large ribosomal subunit protein bL19</fullName>
    </recommendedName>
    <alternativeName>
        <fullName evidence="2">50S ribosomal protein L19</fullName>
    </alternativeName>
</protein>
<reference key="1">
    <citation type="journal article" date="2007" name="PLoS ONE">
        <title>Analysis of the neurotoxin complex genes in Clostridium botulinum A1-A4 and B1 strains: BoNT/A3, /Ba4 and /B1 clusters are located within plasmids.</title>
        <authorList>
            <person name="Smith T.J."/>
            <person name="Hill K.K."/>
            <person name="Foley B.T."/>
            <person name="Detter J.C."/>
            <person name="Munk A.C."/>
            <person name="Bruce D.C."/>
            <person name="Doggett N.A."/>
            <person name="Smith L.A."/>
            <person name="Marks J.D."/>
            <person name="Xie G."/>
            <person name="Brettin T.S."/>
        </authorList>
    </citation>
    <scope>NUCLEOTIDE SEQUENCE [LARGE SCALE GENOMIC DNA]</scope>
    <source>
        <strain>Loch Maree / Type A3</strain>
    </source>
</reference>
<dbReference type="EMBL" id="CP000962">
    <property type="protein sequence ID" value="ACA54250.1"/>
    <property type="molecule type" value="Genomic_DNA"/>
</dbReference>
<dbReference type="RefSeq" id="WP_012342377.1">
    <property type="nucleotide sequence ID" value="NC_010520.1"/>
</dbReference>
<dbReference type="SMR" id="B1KWN4"/>
<dbReference type="KEGG" id="cbl:CLK_1821"/>
<dbReference type="HOGENOM" id="CLU_103507_2_2_9"/>
<dbReference type="GO" id="GO:0022625">
    <property type="term" value="C:cytosolic large ribosomal subunit"/>
    <property type="evidence" value="ECO:0007669"/>
    <property type="project" value="TreeGrafter"/>
</dbReference>
<dbReference type="GO" id="GO:0003735">
    <property type="term" value="F:structural constituent of ribosome"/>
    <property type="evidence" value="ECO:0007669"/>
    <property type="project" value="InterPro"/>
</dbReference>
<dbReference type="GO" id="GO:0006412">
    <property type="term" value="P:translation"/>
    <property type="evidence" value="ECO:0007669"/>
    <property type="project" value="UniProtKB-UniRule"/>
</dbReference>
<dbReference type="FunFam" id="2.30.30.790:FF:000001">
    <property type="entry name" value="50S ribosomal protein L19"/>
    <property type="match status" value="1"/>
</dbReference>
<dbReference type="Gene3D" id="2.30.30.790">
    <property type="match status" value="1"/>
</dbReference>
<dbReference type="HAMAP" id="MF_00402">
    <property type="entry name" value="Ribosomal_bL19"/>
    <property type="match status" value="1"/>
</dbReference>
<dbReference type="InterPro" id="IPR001857">
    <property type="entry name" value="Ribosomal_bL19"/>
</dbReference>
<dbReference type="InterPro" id="IPR018257">
    <property type="entry name" value="Ribosomal_bL19_CS"/>
</dbReference>
<dbReference type="InterPro" id="IPR038657">
    <property type="entry name" value="Ribosomal_bL19_sf"/>
</dbReference>
<dbReference type="InterPro" id="IPR008991">
    <property type="entry name" value="Translation_prot_SH3-like_sf"/>
</dbReference>
<dbReference type="NCBIfam" id="TIGR01024">
    <property type="entry name" value="rplS_bact"/>
    <property type="match status" value="1"/>
</dbReference>
<dbReference type="PANTHER" id="PTHR15680:SF9">
    <property type="entry name" value="LARGE RIBOSOMAL SUBUNIT PROTEIN BL19M"/>
    <property type="match status" value="1"/>
</dbReference>
<dbReference type="PANTHER" id="PTHR15680">
    <property type="entry name" value="RIBOSOMAL PROTEIN L19"/>
    <property type="match status" value="1"/>
</dbReference>
<dbReference type="Pfam" id="PF01245">
    <property type="entry name" value="Ribosomal_L19"/>
    <property type="match status" value="1"/>
</dbReference>
<dbReference type="PIRSF" id="PIRSF002191">
    <property type="entry name" value="Ribosomal_L19"/>
    <property type="match status" value="1"/>
</dbReference>
<dbReference type="PRINTS" id="PR00061">
    <property type="entry name" value="RIBOSOMALL19"/>
</dbReference>
<dbReference type="SUPFAM" id="SSF50104">
    <property type="entry name" value="Translation proteins SH3-like domain"/>
    <property type="match status" value="1"/>
</dbReference>
<dbReference type="PROSITE" id="PS01015">
    <property type="entry name" value="RIBOSOMAL_L19"/>
    <property type="match status" value="1"/>
</dbReference>
<accession>B1KWN4</accession>
<proteinExistence type="inferred from homology"/>
<comment type="function">
    <text evidence="1">This protein is located at the 30S-50S ribosomal subunit interface and may play a role in the structure and function of the aminoacyl-tRNA binding site.</text>
</comment>
<comment type="similarity">
    <text evidence="1">Belongs to the bacterial ribosomal protein bL19 family.</text>
</comment>
<feature type="chain" id="PRO_1000193812" description="Large ribosomal subunit protein bL19">
    <location>
        <begin position="1"/>
        <end position="114"/>
    </location>
</feature>
<organism>
    <name type="scientific">Clostridium botulinum (strain Loch Maree / Type A3)</name>
    <dbReference type="NCBI Taxonomy" id="498214"/>
    <lineage>
        <taxon>Bacteria</taxon>
        <taxon>Bacillati</taxon>
        <taxon>Bacillota</taxon>
        <taxon>Clostridia</taxon>
        <taxon>Eubacteriales</taxon>
        <taxon>Clostridiaceae</taxon>
        <taxon>Clostridium</taxon>
    </lineage>
</organism>
<keyword id="KW-0687">Ribonucleoprotein</keyword>
<keyword id="KW-0689">Ribosomal protein</keyword>
<name>RL19_CLOBM</name>
<sequence>MLEVIKAIEAEQVRNDLPEFHVGDTVKVHQKIKEGTRERVQIFEGTVLKRQNGGARETFTVRRVAYNVAVEKTFPVNSPLIEKIQVVRKGKVRRAKLYYLRDRVGKAAKVKERI</sequence>
<evidence type="ECO:0000255" key="1">
    <source>
        <dbReference type="HAMAP-Rule" id="MF_00402"/>
    </source>
</evidence>
<evidence type="ECO:0000305" key="2"/>